<accession>Q5IZI7</accession>
<feature type="chain" id="PRO_0000373384" description="Major capsid protein">
    <location>
        <begin position="1"/>
        <end position="646"/>
    </location>
</feature>
<organismHost>
    <name type="scientific">Ornithodoros</name>
    <name type="common">relapsing fever ticks</name>
    <dbReference type="NCBI Taxonomy" id="6937"/>
</organismHost>
<organismHost>
    <name type="scientific">Phacochoerus aethiopicus</name>
    <name type="common">Warthog</name>
    <dbReference type="NCBI Taxonomy" id="85517"/>
</organismHost>
<organismHost>
    <name type="scientific">Phacochoerus africanus</name>
    <name type="common">Warthog</name>
    <dbReference type="NCBI Taxonomy" id="41426"/>
</organismHost>
<organismHost>
    <name type="scientific">Potamochoerus larvatus</name>
    <name type="common">Bushpig</name>
    <dbReference type="NCBI Taxonomy" id="273792"/>
</organismHost>
<organismHost>
    <name type="scientific">Sus scrofa</name>
    <name type="common">Pig</name>
    <dbReference type="NCBI Taxonomy" id="9823"/>
</organismHost>
<proteinExistence type="inferred from homology"/>
<name>CAPSH_ASFWA</name>
<evidence type="ECO:0000250" key="1">
    <source>
        <dbReference type="UniProtKB" id="P22776"/>
    </source>
</evidence>
<evidence type="ECO:0000305" key="2"/>
<gene>
    <name type="ordered locus">War-091</name>
</gene>
<reference key="1">
    <citation type="journal article" date="2005" name="J. Clin. Microbiol.">
        <title>Preclinical diagnosis of African swine fever in contact-exposed swine by a real-time PCR assay.</title>
        <authorList>
            <person name="Zsak L."/>
            <person name="Borca M.V."/>
            <person name="Risatti G.R."/>
            <person name="Zsak A."/>
            <person name="French R.A."/>
            <person name="Lu Z."/>
            <person name="Kutish G.F."/>
            <person name="Neilan J.G."/>
            <person name="Callahan J.D."/>
            <person name="Nelson W.M."/>
            <person name="Rock D.L."/>
        </authorList>
    </citation>
    <scope>NUCLEOTIDE SEQUENCE [GENOMIC DNA]</scope>
</reference>
<reference key="2">
    <citation type="submission" date="2003-03" db="EMBL/GenBank/DDBJ databases">
        <title>African swine fever virus genomes.</title>
        <authorList>
            <person name="Kutish G.F."/>
            <person name="Rock D.L."/>
        </authorList>
    </citation>
    <scope>NUCLEOTIDE SEQUENCE [LARGE SCALE GENOMIC DNA]</scope>
</reference>
<sequence length="646" mass="73169">MASGGAFCLIANDGKADKIILAQDLLNSRISNIKNVNKSYGKPDPEPTLSQIEETHLVHFNAHFKPYVPVGFEYNKVRPHTGTPTLGNKLTFGIPQYGDFFHDMVGHHILGACHSSWQDAPIQGTSQMGAHGQLQTFPRNGYDWDNQTPLEGAVYTLVDPFGRPIVPGTKNAYRNLVYYCEYPGERLYENVRFDVNGNSLDEYSSDVTTLVRKFCIPGDKMTGYKHLVGQEVSVEGTSGPLLCNIHDLHKPHQSKPILTDENDTQRTCSHTNPKFLSQHFPENSHNIQTAGKQDITPITDATYLDIRRNVHYSCNGPQTPKYYQPPLALWIKLRFWFNENVNLAIPSVSIPFGERFITIKLASQKDLVNEFPGLFVRQSRFIAGRPSRRNIRFKPWFIPGVINEISLTNNELYINNLFVTPEIHNLFVKRVRFSLIRVHKTQVTHTNNNHHDEKLMSALKWPIEYMFIGLKPTWNISDQNPHQHRDWHKFGHVVNAIMQPTHHAEISFQDRDTALPDACSSISDISPITYPITLPIIKNISVTAHGINLIDKFPSKFCSSYIPFHYGGNAIKTPDDPGAMMITFALKPREEYQPSGHINVSRAREFYISWDTDYVGSITTADLVVSASAINFLLLQNGSAVLRYST</sequence>
<organism>
    <name type="scientific">African swine fever virus (isolate Warthog/Namibia/Wart80/1980)</name>
    <name type="common">ASFV</name>
    <dbReference type="NCBI Taxonomy" id="561444"/>
    <lineage>
        <taxon>Viruses</taxon>
        <taxon>Varidnaviria</taxon>
        <taxon>Bamfordvirae</taxon>
        <taxon>Nucleocytoviricota</taxon>
        <taxon>Pokkesviricetes</taxon>
        <taxon>Asfuvirales</taxon>
        <taxon>Asfarviridae</taxon>
        <taxon>Asfivirus</taxon>
        <taxon>African swine fever virus</taxon>
    </lineage>
</organism>
<dbReference type="EMBL" id="AY578706">
    <property type="protein sequence ID" value="AAT84455.1"/>
    <property type="molecule type" value="Genomic_DNA"/>
</dbReference>
<dbReference type="EMBL" id="AY261366">
    <property type="status" value="NOT_ANNOTATED_CDS"/>
    <property type="molecule type" value="Genomic_DNA"/>
</dbReference>
<dbReference type="SMR" id="Q5IZI7"/>
<dbReference type="Proteomes" id="UP000000858">
    <property type="component" value="Segment"/>
</dbReference>
<dbReference type="GO" id="GO:0044164">
    <property type="term" value="C:host cell cytosol"/>
    <property type="evidence" value="ECO:0007669"/>
    <property type="project" value="UniProtKB-SubCell"/>
</dbReference>
<dbReference type="GO" id="GO:0044167">
    <property type="term" value="C:host cell endoplasmic reticulum membrane"/>
    <property type="evidence" value="ECO:0007669"/>
    <property type="project" value="UniProtKB-SubCell"/>
</dbReference>
<dbReference type="GO" id="GO:0016020">
    <property type="term" value="C:membrane"/>
    <property type="evidence" value="ECO:0007669"/>
    <property type="project" value="UniProtKB-KW"/>
</dbReference>
<dbReference type="GO" id="GO:0019028">
    <property type="term" value="C:viral capsid"/>
    <property type="evidence" value="ECO:0007669"/>
    <property type="project" value="UniProtKB-KW"/>
</dbReference>
<dbReference type="GO" id="GO:0005198">
    <property type="term" value="F:structural molecule activity"/>
    <property type="evidence" value="ECO:0007669"/>
    <property type="project" value="InterPro"/>
</dbReference>
<dbReference type="GO" id="GO:0046718">
    <property type="term" value="P:symbiont entry into host cell"/>
    <property type="evidence" value="ECO:0007669"/>
    <property type="project" value="UniProtKB-KW"/>
</dbReference>
<dbReference type="GO" id="GO:0019062">
    <property type="term" value="P:virion attachment to host cell"/>
    <property type="evidence" value="ECO:0007669"/>
    <property type="project" value="UniProtKB-KW"/>
</dbReference>
<dbReference type="Gene3D" id="2.70.9.10">
    <property type="entry name" value="Adenovirus Type 2 Hexon, domain 4"/>
    <property type="match status" value="1"/>
</dbReference>
<dbReference type="Gene3D" id="2.70.9.20">
    <property type="entry name" value="Major capsid protein Vp54"/>
    <property type="match status" value="1"/>
</dbReference>
<dbReference type="InterPro" id="IPR007542">
    <property type="entry name" value="MCP_C"/>
</dbReference>
<dbReference type="InterPro" id="IPR038519">
    <property type="entry name" value="MCP_C_sf"/>
</dbReference>
<dbReference type="InterPro" id="IPR016112">
    <property type="entry name" value="VP_dsDNA_II"/>
</dbReference>
<dbReference type="Pfam" id="PF04451">
    <property type="entry name" value="Capsid_NCLDV"/>
    <property type="match status" value="1"/>
</dbReference>
<dbReference type="SUPFAM" id="SSF49749">
    <property type="entry name" value="Group II dsDNA viruses VP"/>
    <property type="match status" value="2"/>
</dbReference>
<keyword id="KW-0167">Capsid protein</keyword>
<keyword id="KW-1035">Host cytoplasm</keyword>
<keyword id="KW-1038">Host endoplasmic reticulum</keyword>
<keyword id="KW-1043">Host membrane</keyword>
<keyword id="KW-0945">Host-virus interaction</keyword>
<keyword id="KW-0426">Late protein</keyword>
<keyword id="KW-0472">Membrane</keyword>
<keyword id="KW-1161">Viral attachment to host cell</keyword>
<keyword id="KW-0946">Virion</keyword>
<keyword id="KW-1160">Virus entry into host cell</keyword>
<protein>
    <recommendedName>
        <fullName>Major capsid protein</fullName>
        <shortName>MCP</shortName>
    </recommendedName>
    <alternativeName>
        <fullName>p72</fullName>
    </alternativeName>
    <alternativeName>
        <fullName>p73</fullName>
    </alternativeName>
</protein>
<comment type="function">
    <text evidence="1">Capsid protein that self-assembles to form the pseudo-hexameric capsomers of the icosahedral capsid (By similarity). The capsid is constructed of 2760 pseudo-hexameric capsomers and 12 pentameric capsomers, with a T=277 symmetry, about 200 nm in diameter (By similarity). The capsid encapsulates the DNA-containing nucleoid, the core shell and the inner membrane (By similarity). Plays an essential role in virion assembly (By similarity). Involved in virus attachment to the host cell (By similarity).</text>
</comment>
<comment type="subunit">
    <text evidence="1">Homotrimer (By similarity). The membrane-bound form, but not the cytosolic one, assembles into large complexes (By similarity). Interacts with the minor capsid proteins M1249L and p17; these interactions form a rigid zipper structure that stabilizes the capsomers (By similarity).</text>
</comment>
<comment type="subcellular location">
    <subcellularLocation>
        <location evidence="1">Virion</location>
    </subcellularLocation>
    <subcellularLocation>
        <location>Host endoplasmic reticulum membrane</location>
        <topology evidence="1">Peripheral membrane protein</topology>
    </subcellularLocation>
    <subcellularLocation>
        <location evidence="1">Host cytoplasm</location>
        <location evidence="1">Host cytosol</location>
    </subcellularLocation>
    <text evidence="1">Present in the outer part of the capsid shell (By similarity). Localizes to the viral factory at 16 hpi (By similarity).</text>
</comment>
<comment type="induction">
    <text evidence="2">Expressed in the late phase of the viral replicative cycle.</text>
</comment>
<comment type="similarity">
    <text evidence="2">Belongs to the NCLDV major capsid protein family.</text>
</comment>